<comment type="function">
    <text evidence="1">Might take part in the signal recognition particle (SRP) pathway. This is inferred from the conservation of its genetic proximity to ftsY/ffh. May be a regulatory protein.</text>
</comment>
<comment type="similarity">
    <text evidence="1">Belongs to the UPF0122 family.</text>
</comment>
<feature type="chain" id="PRO_1000100808" description="UPF0122 protein CLH_1195">
    <location>
        <begin position="1"/>
        <end position="109"/>
    </location>
</feature>
<sequence length="109" mass="13072">MEDRVEISMLMDLYSSLLTEKQRSVMALYYDDDLSLAEIAELNKTSRQAIHDLIKRCDKQLLSYESKLNLLQKSMRKEKYIMNFLEELKEKYSVSDKDYLMFKEKLENL</sequence>
<accession>B2V4E0</accession>
<gene>
    <name type="ordered locus">CLH_1195</name>
</gene>
<organism>
    <name type="scientific">Clostridium botulinum (strain Alaska E43 / Type E3)</name>
    <dbReference type="NCBI Taxonomy" id="508767"/>
    <lineage>
        <taxon>Bacteria</taxon>
        <taxon>Bacillati</taxon>
        <taxon>Bacillota</taxon>
        <taxon>Clostridia</taxon>
        <taxon>Eubacteriales</taxon>
        <taxon>Clostridiaceae</taxon>
        <taxon>Clostridium</taxon>
    </lineage>
</organism>
<name>Y1195_CLOBA</name>
<proteinExistence type="inferred from homology"/>
<protein>
    <recommendedName>
        <fullName evidence="1">UPF0122 protein CLH_1195</fullName>
    </recommendedName>
</protein>
<reference key="1">
    <citation type="submission" date="2008-05" db="EMBL/GenBank/DDBJ databases">
        <title>Complete genome sequence of Clostridium botulinum E3 str. Alaska E43.</title>
        <authorList>
            <person name="Brinkac L.M."/>
            <person name="Brown J.L."/>
            <person name="Bruce D."/>
            <person name="Detter C."/>
            <person name="Munk C."/>
            <person name="Smith L.A."/>
            <person name="Smith T.J."/>
            <person name="Sutton G."/>
            <person name="Brettin T.S."/>
        </authorList>
    </citation>
    <scope>NUCLEOTIDE SEQUENCE [LARGE SCALE GENOMIC DNA]</scope>
    <source>
        <strain>Alaska E43 / Type E3</strain>
    </source>
</reference>
<dbReference type="EMBL" id="CP001078">
    <property type="protein sequence ID" value="ACD52188.1"/>
    <property type="molecule type" value="Genomic_DNA"/>
</dbReference>
<dbReference type="RefSeq" id="WP_003373641.1">
    <property type="nucleotide sequence ID" value="NC_010723.1"/>
</dbReference>
<dbReference type="SMR" id="B2V4E0"/>
<dbReference type="KEGG" id="cbt:CLH_1195"/>
<dbReference type="HOGENOM" id="CLU_129218_0_1_9"/>
<dbReference type="Gene3D" id="1.10.10.10">
    <property type="entry name" value="Winged helix-like DNA-binding domain superfamily/Winged helix DNA-binding domain"/>
    <property type="match status" value="1"/>
</dbReference>
<dbReference type="HAMAP" id="MF_00245">
    <property type="entry name" value="UPF0122"/>
    <property type="match status" value="1"/>
</dbReference>
<dbReference type="InterPro" id="IPR013324">
    <property type="entry name" value="RNA_pol_sigma_r3/r4-like"/>
</dbReference>
<dbReference type="InterPro" id="IPR007394">
    <property type="entry name" value="UPF0122"/>
</dbReference>
<dbReference type="InterPro" id="IPR054831">
    <property type="entry name" value="UPF0122_fam_protein"/>
</dbReference>
<dbReference type="InterPro" id="IPR036388">
    <property type="entry name" value="WH-like_DNA-bd_sf"/>
</dbReference>
<dbReference type="NCBIfam" id="NF001072">
    <property type="entry name" value="PRK00118.2-2"/>
    <property type="match status" value="1"/>
</dbReference>
<dbReference type="NCBIfam" id="NF045758">
    <property type="entry name" value="YlxM"/>
    <property type="match status" value="1"/>
</dbReference>
<dbReference type="PANTHER" id="PTHR40083">
    <property type="entry name" value="UPF0122 PROTEIN CBO2450/CLC_2298"/>
    <property type="match status" value="1"/>
</dbReference>
<dbReference type="PANTHER" id="PTHR40083:SF1">
    <property type="entry name" value="UPF0122 PROTEIN YLXM"/>
    <property type="match status" value="1"/>
</dbReference>
<dbReference type="Pfam" id="PF04297">
    <property type="entry name" value="UPF0122"/>
    <property type="match status" value="1"/>
</dbReference>
<dbReference type="SUPFAM" id="SSF88659">
    <property type="entry name" value="Sigma3 and sigma4 domains of RNA polymerase sigma factors"/>
    <property type="match status" value="1"/>
</dbReference>
<evidence type="ECO:0000255" key="1">
    <source>
        <dbReference type="HAMAP-Rule" id="MF_00245"/>
    </source>
</evidence>